<feature type="chain" id="PRO_1000122963" description="Bifunctional purine biosynthesis protein PurH">
    <location>
        <begin position="1"/>
        <end position="509"/>
    </location>
</feature>
<feature type="domain" description="MGS-like" evidence="2">
    <location>
        <begin position="1"/>
        <end position="144"/>
    </location>
</feature>
<gene>
    <name evidence="1" type="primary">purH</name>
    <name type="ordered locus">LMHCC_0799</name>
</gene>
<keyword id="KW-0378">Hydrolase</keyword>
<keyword id="KW-0511">Multifunctional enzyme</keyword>
<keyword id="KW-0658">Purine biosynthesis</keyword>
<keyword id="KW-0808">Transferase</keyword>
<sequence length="509" mass="54912">MKRALISVSDKNGIVPFAEKLVELGVEIISTGGTKAAFEQAGVPVTGIEEVTEFPEMLDGRVKTLHPAIHGGLLARRDTAEHMEAIAAHDIKPIDLVVVNLYPFQETIQKSGVTLEEAIENIDIGGPSMLRSAAKNYAAVTVVVDTVDYDTVLTELEEHGATTFETRQRLAAKVFRHTAAYDALIAEYLTNITGETFPEKVTLTYNRKQVLRYGENPHQDAAFYTEPGTVENSISSAKQLHGKELSYNNIRDADAALKIASEFTEPVAVAVKHMNPCGVGVGENIEEAYLKAYEADETSIFGGIVALNKEVDAKTAEHMSKIFLEIIIAPSFSEEAFAILTKKKNIRLLTVPFAGSVKGFEKTSVNGGLLIQASDSVIEDTASYEVVTEKQPTEAEMKALIAQWKIVKHVKSNAIVVGSDKQTLGIGAGQMNRIGSALIALEQAGEKAKGAVLASDAFFPMDDTVEAAAKAGITAIIQPGGSIKDKESIAMANKYGISMVLTHVRHFKH</sequence>
<proteinExistence type="inferred from homology"/>
<reference key="1">
    <citation type="journal article" date="2011" name="J. Bacteriol.">
        <title>Genome sequence of lineage III Listeria monocytogenes strain HCC23.</title>
        <authorList>
            <person name="Steele C.L."/>
            <person name="Donaldson J.R."/>
            <person name="Paul D."/>
            <person name="Banes M.M."/>
            <person name="Arick T."/>
            <person name="Bridges S.M."/>
            <person name="Lawrence M.L."/>
        </authorList>
    </citation>
    <scope>NUCLEOTIDE SEQUENCE [LARGE SCALE GENOMIC DNA]</scope>
    <source>
        <strain>HCC23</strain>
    </source>
</reference>
<name>PUR9_LISMH</name>
<accession>B8DDZ2</accession>
<evidence type="ECO:0000255" key="1">
    <source>
        <dbReference type="HAMAP-Rule" id="MF_00139"/>
    </source>
</evidence>
<evidence type="ECO:0000255" key="2">
    <source>
        <dbReference type="PROSITE-ProRule" id="PRU01202"/>
    </source>
</evidence>
<dbReference type="EC" id="2.1.2.3" evidence="1"/>
<dbReference type="EC" id="3.5.4.10" evidence="1"/>
<dbReference type="EMBL" id="CP001175">
    <property type="protein sequence ID" value="ACK39151.1"/>
    <property type="molecule type" value="Genomic_DNA"/>
</dbReference>
<dbReference type="RefSeq" id="WP_012581152.1">
    <property type="nucleotide sequence ID" value="NC_011660.1"/>
</dbReference>
<dbReference type="SMR" id="B8DDZ2"/>
<dbReference type="KEGG" id="lmh:LMHCC_0799"/>
<dbReference type="HOGENOM" id="CLU_016316_5_2_9"/>
<dbReference type="UniPathway" id="UPA00074">
    <property type="reaction ID" value="UER00133"/>
</dbReference>
<dbReference type="UniPathway" id="UPA00074">
    <property type="reaction ID" value="UER00135"/>
</dbReference>
<dbReference type="GO" id="GO:0005829">
    <property type="term" value="C:cytosol"/>
    <property type="evidence" value="ECO:0007669"/>
    <property type="project" value="TreeGrafter"/>
</dbReference>
<dbReference type="GO" id="GO:0003937">
    <property type="term" value="F:IMP cyclohydrolase activity"/>
    <property type="evidence" value="ECO:0007669"/>
    <property type="project" value="UniProtKB-UniRule"/>
</dbReference>
<dbReference type="GO" id="GO:0004643">
    <property type="term" value="F:phosphoribosylaminoimidazolecarboxamide formyltransferase activity"/>
    <property type="evidence" value="ECO:0007669"/>
    <property type="project" value="UniProtKB-UniRule"/>
</dbReference>
<dbReference type="GO" id="GO:0006189">
    <property type="term" value="P:'de novo' IMP biosynthetic process"/>
    <property type="evidence" value="ECO:0007669"/>
    <property type="project" value="UniProtKB-UniRule"/>
</dbReference>
<dbReference type="CDD" id="cd01421">
    <property type="entry name" value="IMPCH"/>
    <property type="match status" value="1"/>
</dbReference>
<dbReference type="FunFam" id="3.40.140.20:FF:000001">
    <property type="entry name" value="Bifunctional purine biosynthesis protein PurH"/>
    <property type="match status" value="1"/>
</dbReference>
<dbReference type="FunFam" id="3.40.140.20:FF:000002">
    <property type="entry name" value="Bifunctional purine biosynthesis protein PurH"/>
    <property type="match status" value="1"/>
</dbReference>
<dbReference type="FunFam" id="3.40.50.1380:FF:000001">
    <property type="entry name" value="Bifunctional purine biosynthesis protein PurH"/>
    <property type="match status" value="1"/>
</dbReference>
<dbReference type="Gene3D" id="3.40.140.20">
    <property type="match status" value="2"/>
</dbReference>
<dbReference type="Gene3D" id="3.40.50.1380">
    <property type="entry name" value="Methylglyoxal synthase-like domain"/>
    <property type="match status" value="1"/>
</dbReference>
<dbReference type="HAMAP" id="MF_00139">
    <property type="entry name" value="PurH"/>
    <property type="match status" value="1"/>
</dbReference>
<dbReference type="InterPro" id="IPR024051">
    <property type="entry name" value="AICAR_Tfase_dup_dom_sf"/>
</dbReference>
<dbReference type="InterPro" id="IPR016193">
    <property type="entry name" value="Cytidine_deaminase-like"/>
</dbReference>
<dbReference type="InterPro" id="IPR011607">
    <property type="entry name" value="MGS-like_dom"/>
</dbReference>
<dbReference type="InterPro" id="IPR036914">
    <property type="entry name" value="MGS-like_dom_sf"/>
</dbReference>
<dbReference type="InterPro" id="IPR002695">
    <property type="entry name" value="PurH-like"/>
</dbReference>
<dbReference type="NCBIfam" id="NF002049">
    <property type="entry name" value="PRK00881.1"/>
    <property type="match status" value="1"/>
</dbReference>
<dbReference type="NCBIfam" id="TIGR00355">
    <property type="entry name" value="purH"/>
    <property type="match status" value="1"/>
</dbReference>
<dbReference type="PANTHER" id="PTHR11692:SF0">
    <property type="entry name" value="BIFUNCTIONAL PURINE BIOSYNTHESIS PROTEIN ATIC"/>
    <property type="match status" value="1"/>
</dbReference>
<dbReference type="PANTHER" id="PTHR11692">
    <property type="entry name" value="BIFUNCTIONAL PURINE BIOSYNTHESIS PROTEIN PURH"/>
    <property type="match status" value="1"/>
</dbReference>
<dbReference type="Pfam" id="PF01808">
    <property type="entry name" value="AICARFT_IMPCHas"/>
    <property type="match status" value="1"/>
</dbReference>
<dbReference type="Pfam" id="PF02142">
    <property type="entry name" value="MGS"/>
    <property type="match status" value="1"/>
</dbReference>
<dbReference type="PIRSF" id="PIRSF000414">
    <property type="entry name" value="AICARFT_IMPCHas"/>
    <property type="match status" value="1"/>
</dbReference>
<dbReference type="SMART" id="SM00798">
    <property type="entry name" value="AICARFT_IMPCHas"/>
    <property type="match status" value="1"/>
</dbReference>
<dbReference type="SMART" id="SM00851">
    <property type="entry name" value="MGS"/>
    <property type="match status" value="1"/>
</dbReference>
<dbReference type="SUPFAM" id="SSF53927">
    <property type="entry name" value="Cytidine deaminase-like"/>
    <property type="match status" value="1"/>
</dbReference>
<dbReference type="SUPFAM" id="SSF52335">
    <property type="entry name" value="Methylglyoxal synthase-like"/>
    <property type="match status" value="1"/>
</dbReference>
<dbReference type="PROSITE" id="PS51855">
    <property type="entry name" value="MGS"/>
    <property type="match status" value="1"/>
</dbReference>
<organism>
    <name type="scientific">Listeria monocytogenes serotype 4a (strain HCC23)</name>
    <dbReference type="NCBI Taxonomy" id="552536"/>
    <lineage>
        <taxon>Bacteria</taxon>
        <taxon>Bacillati</taxon>
        <taxon>Bacillota</taxon>
        <taxon>Bacilli</taxon>
        <taxon>Bacillales</taxon>
        <taxon>Listeriaceae</taxon>
        <taxon>Listeria</taxon>
    </lineage>
</organism>
<comment type="catalytic activity">
    <reaction evidence="1">
        <text>(6R)-10-formyltetrahydrofolate + 5-amino-1-(5-phospho-beta-D-ribosyl)imidazole-4-carboxamide = 5-formamido-1-(5-phospho-D-ribosyl)imidazole-4-carboxamide + (6S)-5,6,7,8-tetrahydrofolate</text>
        <dbReference type="Rhea" id="RHEA:22192"/>
        <dbReference type="ChEBI" id="CHEBI:57453"/>
        <dbReference type="ChEBI" id="CHEBI:58467"/>
        <dbReference type="ChEBI" id="CHEBI:58475"/>
        <dbReference type="ChEBI" id="CHEBI:195366"/>
        <dbReference type="EC" id="2.1.2.3"/>
    </reaction>
</comment>
<comment type="catalytic activity">
    <reaction evidence="1">
        <text>IMP + H2O = 5-formamido-1-(5-phospho-D-ribosyl)imidazole-4-carboxamide</text>
        <dbReference type="Rhea" id="RHEA:18445"/>
        <dbReference type="ChEBI" id="CHEBI:15377"/>
        <dbReference type="ChEBI" id="CHEBI:58053"/>
        <dbReference type="ChEBI" id="CHEBI:58467"/>
        <dbReference type="EC" id="3.5.4.10"/>
    </reaction>
</comment>
<comment type="pathway">
    <text evidence="1">Purine metabolism; IMP biosynthesis via de novo pathway; 5-formamido-1-(5-phospho-D-ribosyl)imidazole-4-carboxamide from 5-amino-1-(5-phospho-D-ribosyl)imidazole-4-carboxamide (10-formyl THF route): step 1/1.</text>
</comment>
<comment type="pathway">
    <text evidence="1">Purine metabolism; IMP biosynthesis via de novo pathway; IMP from 5-formamido-1-(5-phospho-D-ribosyl)imidazole-4-carboxamide: step 1/1.</text>
</comment>
<comment type="domain">
    <text evidence="1">The IMP cyclohydrolase activity resides in the N-terminal region.</text>
</comment>
<comment type="similarity">
    <text evidence="1">Belongs to the PurH family.</text>
</comment>
<protein>
    <recommendedName>
        <fullName evidence="1">Bifunctional purine biosynthesis protein PurH</fullName>
    </recommendedName>
    <domain>
        <recommendedName>
            <fullName evidence="1">Phosphoribosylaminoimidazolecarboxamide formyltransferase</fullName>
            <ecNumber evidence="1">2.1.2.3</ecNumber>
        </recommendedName>
        <alternativeName>
            <fullName evidence="1">AICAR transformylase</fullName>
        </alternativeName>
    </domain>
    <domain>
        <recommendedName>
            <fullName evidence="1">IMP cyclohydrolase</fullName>
            <ecNumber evidence="1">3.5.4.10</ecNumber>
        </recommendedName>
        <alternativeName>
            <fullName evidence="1">ATIC</fullName>
        </alternativeName>
        <alternativeName>
            <fullName evidence="1">IMP synthase</fullName>
        </alternativeName>
        <alternativeName>
            <fullName evidence="1">Inosinicase</fullName>
        </alternativeName>
    </domain>
</protein>